<keyword id="KW-0472">Membrane</keyword>
<keyword id="KW-1185">Reference proteome</keyword>
<keyword id="KW-0812">Transmembrane</keyword>
<keyword id="KW-1133">Transmembrane helix</keyword>
<protein>
    <recommendedName>
        <fullName>Serpentine receptor class epsilon-27</fullName>
        <shortName>Protein sre-27</shortName>
    </recommendedName>
</protein>
<organism>
    <name type="scientific">Caenorhabditis elegans</name>
    <dbReference type="NCBI Taxonomy" id="6239"/>
    <lineage>
        <taxon>Eukaryota</taxon>
        <taxon>Metazoa</taxon>
        <taxon>Ecdysozoa</taxon>
        <taxon>Nematoda</taxon>
        <taxon>Chromadorea</taxon>
        <taxon>Rhabditida</taxon>
        <taxon>Rhabditina</taxon>
        <taxon>Rhabditomorpha</taxon>
        <taxon>Rhabditoidea</taxon>
        <taxon>Rhabditidae</taxon>
        <taxon>Peloderinae</taxon>
        <taxon>Caenorhabditis</taxon>
    </lineage>
</organism>
<proteinExistence type="inferred from homology"/>
<dbReference type="EMBL" id="AL023847">
    <property type="protein sequence ID" value="CAA19545.1"/>
    <property type="molecule type" value="Genomic_DNA"/>
</dbReference>
<dbReference type="PIR" id="T27199">
    <property type="entry name" value="T27199"/>
</dbReference>
<dbReference type="RefSeq" id="NP_496636.1">
    <property type="nucleotide sequence ID" value="NM_064235.2"/>
</dbReference>
<dbReference type="SMR" id="O62488"/>
<dbReference type="FunCoup" id="O62488">
    <property type="interactions" value="7"/>
</dbReference>
<dbReference type="STRING" id="6239.Y57A10C.3.1"/>
<dbReference type="PaxDb" id="6239-Y57A10C.3"/>
<dbReference type="EnsemblMetazoa" id="Y57A10C.3.1">
    <property type="protein sequence ID" value="Y57A10C.3.1"/>
    <property type="gene ID" value="WBGene00013281"/>
</dbReference>
<dbReference type="GeneID" id="190348"/>
<dbReference type="KEGG" id="cel:CELE_Y57A10C.3"/>
<dbReference type="UCSC" id="Y57A10C.3">
    <property type="organism name" value="c. elegans"/>
</dbReference>
<dbReference type="AGR" id="WB:WBGene00013281"/>
<dbReference type="CTD" id="190348"/>
<dbReference type="WormBase" id="Y57A10C.3">
    <property type="protein sequence ID" value="CE18415"/>
    <property type="gene ID" value="WBGene00013281"/>
    <property type="gene designation" value="sre-27"/>
</dbReference>
<dbReference type="eggNOG" id="ENOG502TGB8">
    <property type="taxonomic scope" value="Eukaryota"/>
</dbReference>
<dbReference type="GeneTree" id="ENSGT01130000278788"/>
<dbReference type="HOGENOM" id="CLU_063305_1_0_1"/>
<dbReference type="InParanoid" id="O62488"/>
<dbReference type="OMA" id="FMEYHYM"/>
<dbReference type="OrthoDB" id="5829599at2759"/>
<dbReference type="PhylomeDB" id="O62488"/>
<dbReference type="PRO" id="PR:O62488"/>
<dbReference type="Proteomes" id="UP000001940">
    <property type="component" value="Chromosome II"/>
</dbReference>
<dbReference type="GO" id="GO:0016020">
    <property type="term" value="C:membrane"/>
    <property type="evidence" value="ECO:0007669"/>
    <property type="project" value="UniProtKB-SubCell"/>
</dbReference>
<dbReference type="GO" id="GO:0007606">
    <property type="term" value="P:sensory perception of chemical stimulus"/>
    <property type="evidence" value="ECO:0007669"/>
    <property type="project" value="InterPro"/>
</dbReference>
<dbReference type="InterPro" id="IPR004151">
    <property type="entry name" value="7TM_GPCR_serpentine_rcpt_Sre"/>
</dbReference>
<dbReference type="PANTHER" id="PTHR23128">
    <property type="entry name" value="SERPENTINE RECEPTOR, CLASS E (EPSILON)-RELATED"/>
    <property type="match status" value="1"/>
</dbReference>
<dbReference type="PANTHER" id="PTHR23128:SF135">
    <property type="entry name" value="SERPENTINE RECEPTOR, CLASS E (EPSILON)-RELATED"/>
    <property type="match status" value="1"/>
</dbReference>
<dbReference type="Pfam" id="PF03125">
    <property type="entry name" value="Sre"/>
    <property type="match status" value="1"/>
</dbReference>
<name>SRE27_CAEEL</name>
<accession>O62488</accession>
<evidence type="ECO:0000255" key="1"/>
<evidence type="ECO:0000305" key="2"/>
<gene>
    <name type="primary">sre-27</name>
    <name type="ORF">Y57A10C.3</name>
</gene>
<sequence>MIIKNMDASTNVPYLWLPIFLYDEPILASQVIASIELILYSICLYIVVVSLKIFVQVRMFHLNFIILVAPFFGIWFELIIGKLITMCYQLSIFSIGNLEIRKFYVLWTDDSNKMLVVNSFEGLELLIIAGFMEYHYMFSVVFGAVAVAIERLAASVLIDNYESTNKIFIPIALTVFFQIIAITCSCLALFHKFTIITINGTWIVSCACSSIVFFLVERINLRWKAEMEHPRREKVYTISQRFQVKENIRALDLGKRLIFSELGTISIIGLIIATLLLELVPPSLVHIAENALFLNPFGICTVAMYSIPAWKKRYKNAFPSIFCFLMRLKNRKIDVQSMEPLEEFSKRIYEETNIHFAQLNESWT</sequence>
<reference key="1">
    <citation type="journal article" date="1998" name="Science">
        <title>Genome sequence of the nematode C. elegans: a platform for investigating biology.</title>
        <authorList>
            <consortium name="The C. elegans sequencing consortium"/>
        </authorList>
    </citation>
    <scope>NUCLEOTIDE SEQUENCE [LARGE SCALE GENOMIC DNA]</scope>
    <source>
        <strain>Bristol N2</strain>
    </source>
</reference>
<feature type="chain" id="PRO_0000104542" description="Serpentine receptor class epsilon-27">
    <location>
        <begin position="1"/>
        <end position="364"/>
    </location>
</feature>
<feature type="transmembrane region" description="Helical" evidence="1">
    <location>
        <begin position="31"/>
        <end position="51"/>
    </location>
</feature>
<feature type="transmembrane region" description="Helical" evidence="1">
    <location>
        <begin position="64"/>
        <end position="84"/>
    </location>
</feature>
<feature type="transmembrane region" description="Helical" evidence="1">
    <location>
        <begin position="125"/>
        <end position="145"/>
    </location>
</feature>
<feature type="transmembrane region" description="Helical" evidence="1">
    <location>
        <begin position="167"/>
        <end position="187"/>
    </location>
</feature>
<feature type="transmembrane region" description="Helical" evidence="1">
    <location>
        <begin position="195"/>
        <end position="215"/>
    </location>
</feature>
<feature type="transmembrane region" description="Helical" evidence="1">
    <location>
        <begin position="257"/>
        <end position="277"/>
    </location>
</feature>
<feature type="transmembrane region" description="Helical" evidence="1">
    <location>
        <begin position="290"/>
        <end position="310"/>
    </location>
</feature>
<comment type="subcellular location">
    <subcellularLocation>
        <location evidence="2">Membrane</location>
        <topology evidence="2">Multi-pass membrane protein</topology>
    </subcellularLocation>
</comment>
<comment type="similarity">
    <text evidence="2">Belongs to the nematode receptor-like protein sre family.</text>
</comment>